<keyword id="KW-1003">Cell membrane</keyword>
<keyword id="KW-0868">Chloride</keyword>
<keyword id="KW-0869">Chloride channel</keyword>
<keyword id="KW-0325">Glycoprotein</keyword>
<keyword id="KW-0407">Ion channel</keyword>
<keyword id="KW-0406">Ion transport</keyword>
<keyword id="KW-0472">Membrane</keyword>
<keyword id="KW-0597">Phosphoprotein</keyword>
<keyword id="KW-1185">Reference proteome</keyword>
<keyword id="KW-0812">Transmembrane</keyword>
<keyword id="KW-1133">Transmembrane helix</keyword>
<keyword id="KW-0813">Transport</keyword>
<accession>Q66H28</accession>
<protein>
    <recommendedName>
        <fullName evidence="2">Proton-activated chloride channel</fullName>
        <shortName evidence="2">PAC</shortName>
    </recommendedName>
    <alternativeName>
        <fullName evidence="4">Transmembrane protein 206</fullName>
    </alternativeName>
</protein>
<reference key="1">
    <citation type="journal article" date="2004" name="Genome Res.">
        <title>The status, quality, and expansion of the NIH full-length cDNA project: the Mammalian Gene Collection (MGC).</title>
        <authorList>
            <consortium name="The MGC Project Team"/>
        </authorList>
    </citation>
    <scope>NUCLEOTIDE SEQUENCE [LARGE SCALE MRNA]</scope>
    <source>
        <tissue>Testis</tissue>
    </source>
</reference>
<reference key="2">
    <citation type="journal article" date="2012" name="Nat. Commun.">
        <title>Quantitative maps of protein phosphorylation sites across 14 different rat organs and tissues.</title>
        <authorList>
            <person name="Lundby A."/>
            <person name="Secher A."/>
            <person name="Lage K."/>
            <person name="Nordsborg N.B."/>
            <person name="Dmytriyev A."/>
            <person name="Lundby C."/>
            <person name="Olsen J.V."/>
        </authorList>
    </citation>
    <scope>PHOSPHORYLATION [LARGE SCALE ANALYSIS] AT SER-14 AND SER-24</scope>
    <scope>IDENTIFICATION BY MASS SPECTROMETRY [LARGE SCALE ANALYSIS]</scope>
</reference>
<comment type="function">
    <text evidence="2">Chloride channel gated by pH that facilitates the entry of chloride ions into cells upon exposure to extracellular acidic pH. Involved in acidosis-induced cell death by mediating chloride influx and subsequent cell swelling.</text>
</comment>
<comment type="catalytic activity">
    <reaction evidence="2">
        <text>chloride(in) = chloride(out)</text>
        <dbReference type="Rhea" id="RHEA:29823"/>
        <dbReference type="ChEBI" id="CHEBI:17996"/>
    </reaction>
</comment>
<comment type="subcellular location">
    <subcellularLocation>
        <location evidence="2">Cell membrane</location>
        <topology evidence="2">Multi-pass membrane protein</topology>
    </subcellularLocation>
</comment>
<comment type="similarity">
    <text evidence="4">Belongs to the proton-activated chloride channel family.</text>
</comment>
<feature type="chain" id="PRO_0000279474" description="Proton-activated chloride channel">
    <location>
        <begin position="1"/>
        <end position="350"/>
    </location>
</feature>
<feature type="topological domain" description="Cytoplasmic" evidence="2">
    <location>
        <begin position="1"/>
        <end position="64"/>
    </location>
</feature>
<feature type="transmembrane region" description="Helical" evidence="3">
    <location>
        <begin position="65"/>
        <end position="85"/>
    </location>
</feature>
<feature type="topological domain" description="Extracellular" evidence="3">
    <location>
        <begin position="86"/>
        <end position="301"/>
    </location>
</feature>
<feature type="transmembrane region" description="Helical" evidence="3">
    <location>
        <begin position="302"/>
        <end position="318"/>
    </location>
</feature>
<feature type="topological domain" description="Cytoplasmic" evidence="2">
    <location>
        <begin position="319"/>
        <end position="350"/>
    </location>
</feature>
<feature type="modified residue" description="Phosphoserine" evidence="2">
    <location>
        <position position="9"/>
    </location>
</feature>
<feature type="modified residue" description="Phosphotyrosine" evidence="1">
    <location>
        <position position="10"/>
    </location>
</feature>
<feature type="modified residue" description="Phosphoserine" evidence="6">
    <location>
        <position position="14"/>
    </location>
</feature>
<feature type="modified residue" description="Phosphoserine" evidence="6">
    <location>
        <position position="24"/>
    </location>
</feature>
<feature type="glycosylation site" description="N-linked (GlcNAc...) asparagine" evidence="3">
    <location>
        <position position="155"/>
    </location>
</feature>
<feature type="glycosylation site" description="N-linked (GlcNAc...) asparagine" evidence="3">
    <location>
        <position position="162"/>
    </location>
</feature>
<gene>
    <name evidence="2" type="primary">Pacc1</name>
    <name evidence="5" type="synonym">Tmem206</name>
</gene>
<organism>
    <name type="scientific">Rattus norvegicus</name>
    <name type="common">Rat</name>
    <dbReference type="NCBI Taxonomy" id="10116"/>
    <lineage>
        <taxon>Eukaryota</taxon>
        <taxon>Metazoa</taxon>
        <taxon>Chordata</taxon>
        <taxon>Craniata</taxon>
        <taxon>Vertebrata</taxon>
        <taxon>Euteleostomi</taxon>
        <taxon>Mammalia</taxon>
        <taxon>Eutheria</taxon>
        <taxon>Euarchontoglires</taxon>
        <taxon>Glires</taxon>
        <taxon>Rodentia</taxon>
        <taxon>Myomorpha</taxon>
        <taxon>Muroidea</taxon>
        <taxon>Muridae</taxon>
        <taxon>Murinae</taxon>
        <taxon>Rattus</taxon>
    </lineage>
</organism>
<dbReference type="EMBL" id="BC082061">
    <property type="protein sequence ID" value="AAH82061.1"/>
    <property type="molecule type" value="mRNA"/>
</dbReference>
<dbReference type="RefSeq" id="NP_001007680.1">
    <property type="nucleotide sequence ID" value="NM_001007679.1"/>
</dbReference>
<dbReference type="SMR" id="Q66H28"/>
<dbReference type="FunCoup" id="Q66H28">
    <property type="interactions" value="1668"/>
</dbReference>
<dbReference type="STRING" id="10116.ENSRNOP00000005387"/>
<dbReference type="GlyCosmos" id="Q66H28">
    <property type="glycosylation" value="2 sites, No reported glycans"/>
</dbReference>
<dbReference type="GlyGen" id="Q66H28">
    <property type="glycosylation" value="2 sites"/>
</dbReference>
<dbReference type="iPTMnet" id="Q66H28"/>
<dbReference type="PhosphoSitePlus" id="Q66H28"/>
<dbReference type="SwissPalm" id="Q66H28"/>
<dbReference type="jPOST" id="Q66H28"/>
<dbReference type="PaxDb" id="10116-ENSRNOP00000005387"/>
<dbReference type="Ensembl" id="ENSRNOT00000005387.7">
    <property type="protein sequence ID" value="ENSRNOP00000005387.4"/>
    <property type="gene ID" value="ENSRNOG00000003915.7"/>
</dbReference>
<dbReference type="GeneID" id="305070"/>
<dbReference type="KEGG" id="rno:305070"/>
<dbReference type="AGR" id="RGD:1359339"/>
<dbReference type="CTD" id="55248"/>
<dbReference type="RGD" id="1359339">
    <property type="gene designation" value="Pacc1"/>
</dbReference>
<dbReference type="eggNOG" id="ENOG502QS5H">
    <property type="taxonomic scope" value="Eukaryota"/>
</dbReference>
<dbReference type="GeneTree" id="ENSGT00390000017528"/>
<dbReference type="HOGENOM" id="CLU_068069_0_0_1"/>
<dbReference type="InParanoid" id="Q66H28"/>
<dbReference type="OrthoDB" id="31558at9989"/>
<dbReference type="PhylomeDB" id="Q66H28"/>
<dbReference type="TreeFam" id="TF333307"/>
<dbReference type="PRO" id="PR:Q66H28"/>
<dbReference type="Proteomes" id="UP000002494">
    <property type="component" value="Chromosome 13"/>
</dbReference>
<dbReference type="Bgee" id="ENSRNOG00000003915">
    <property type="expression patterns" value="Expressed in ovary and 18 other cell types or tissues"/>
</dbReference>
<dbReference type="GO" id="GO:0034707">
    <property type="term" value="C:chloride channel complex"/>
    <property type="evidence" value="ECO:0007669"/>
    <property type="project" value="UniProtKB-KW"/>
</dbReference>
<dbReference type="GO" id="GO:0005886">
    <property type="term" value="C:plasma membrane"/>
    <property type="evidence" value="ECO:0000250"/>
    <property type="project" value="UniProtKB"/>
</dbReference>
<dbReference type="GO" id="GO:0061797">
    <property type="term" value="F:pH-gated chloride channel activity"/>
    <property type="evidence" value="ECO:0000250"/>
    <property type="project" value="UniProtKB"/>
</dbReference>
<dbReference type="GO" id="GO:0006821">
    <property type="term" value="P:chloride transport"/>
    <property type="evidence" value="ECO:0000250"/>
    <property type="project" value="UniProtKB"/>
</dbReference>
<dbReference type="InterPro" id="IPR029366">
    <property type="entry name" value="TMEM206"/>
</dbReference>
<dbReference type="PANTHER" id="PTHR16087:SF0">
    <property type="entry name" value="PROTON-ACTIVATED CHLORIDE CHANNEL"/>
    <property type="match status" value="1"/>
</dbReference>
<dbReference type="PANTHER" id="PTHR16087">
    <property type="entry name" value="TRANSMEMBRANE PROTEIN 206"/>
    <property type="match status" value="1"/>
</dbReference>
<dbReference type="Pfam" id="PF15122">
    <property type="entry name" value="TMEM206"/>
    <property type="match status" value="1"/>
</dbReference>
<proteinExistence type="evidence at protein level"/>
<sequence length="350" mass="40073">MIRQDLSTSYQELSEELEQVVENSEQADERDKELVQVQGPGVVPGVDNESASSSIRFSKACLKNVFSVLLILIYLLLMAVAVFLVYQTITDFREKLKHPVMSVSYKEVDRYDAPGIALYPGQAQLLSCKHHYEVIPPLASPGQPGDRNCTTQRINYTHPFSNHTMQSALIVQGPQEVKKRELVFLQFRLNQSDEDFSAIDYLLFSSFREFMQSPDKAGFMQACESAYSSWKFSGGFRTWVKMSLVKTKEEDGREAVEFRQETSVVNYIDQRPAAEKSTQLFFVVFEWKDPFIQKVQDIITANPWNTIALLCGAFLALFKAAEFAKLSVKWMIKIRKRYLKRRGQATNHIS</sequence>
<name>PACC1_RAT</name>
<evidence type="ECO:0000250" key="1">
    <source>
        <dbReference type="UniProtKB" id="Q9D771"/>
    </source>
</evidence>
<evidence type="ECO:0000250" key="2">
    <source>
        <dbReference type="UniProtKB" id="Q9H813"/>
    </source>
</evidence>
<evidence type="ECO:0000255" key="3"/>
<evidence type="ECO:0000305" key="4"/>
<evidence type="ECO:0000312" key="5">
    <source>
        <dbReference type="RGD" id="1359339"/>
    </source>
</evidence>
<evidence type="ECO:0007744" key="6">
    <source>
    </source>
</evidence>